<dbReference type="EC" id="4.3.2.10"/>
<dbReference type="EMBL" id="U82227">
    <property type="protein sequence ID" value="AAB63022.1"/>
    <property type="molecule type" value="Genomic_DNA"/>
</dbReference>
<dbReference type="EMBL" id="Y18930">
    <property type="protein sequence ID" value="CAB57702.1"/>
    <property type="molecule type" value="Genomic_DNA"/>
</dbReference>
<dbReference type="EMBL" id="AE006641">
    <property type="protein sequence ID" value="AAK40908.1"/>
    <property type="molecule type" value="Genomic_DNA"/>
</dbReference>
<dbReference type="PIR" id="E90206">
    <property type="entry name" value="E90206"/>
</dbReference>
<dbReference type="RefSeq" id="WP_009991116.1">
    <property type="nucleotide sequence ID" value="NC_002754.1"/>
</dbReference>
<dbReference type="SMR" id="O33774"/>
<dbReference type="FunCoup" id="O33774">
    <property type="interactions" value="232"/>
</dbReference>
<dbReference type="STRING" id="273057.SSO0597"/>
<dbReference type="PaxDb" id="273057-SSO0597"/>
<dbReference type="EnsemblBacteria" id="AAK40908">
    <property type="protein sequence ID" value="AAK40908"/>
    <property type="gene ID" value="SSO0597"/>
</dbReference>
<dbReference type="GeneID" id="44129598"/>
<dbReference type="KEGG" id="sso:SSO0597"/>
<dbReference type="PATRIC" id="fig|273057.12.peg.604"/>
<dbReference type="eggNOG" id="arCOG00617">
    <property type="taxonomic scope" value="Archaea"/>
</dbReference>
<dbReference type="HOGENOM" id="CLU_048577_4_0_2"/>
<dbReference type="InParanoid" id="O33774"/>
<dbReference type="PhylomeDB" id="O33774"/>
<dbReference type="UniPathway" id="UPA00031">
    <property type="reaction ID" value="UER00010"/>
</dbReference>
<dbReference type="Proteomes" id="UP000001974">
    <property type="component" value="Chromosome"/>
</dbReference>
<dbReference type="GO" id="GO:0005737">
    <property type="term" value="C:cytoplasm"/>
    <property type="evidence" value="ECO:0007669"/>
    <property type="project" value="UniProtKB-SubCell"/>
</dbReference>
<dbReference type="GO" id="GO:0000107">
    <property type="term" value="F:imidazoleglycerol-phosphate synthase activity"/>
    <property type="evidence" value="ECO:0000318"/>
    <property type="project" value="GO_Central"/>
</dbReference>
<dbReference type="GO" id="GO:0016829">
    <property type="term" value="F:lyase activity"/>
    <property type="evidence" value="ECO:0007669"/>
    <property type="project" value="UniProtKB-KW"/>
</dbReference>
<dbReference type="GO" id="GO:0000105">
    <property type="term" value="P:L-histidine biosynthetic process"/>
    <property type="evidence" value="ECO:0007669"/>
    <property type="project" value="UniProtKB-UniRule"/>
</dbReference>
<dbReference type="CDD" id="cd04731">
    <property type="entry name" value="HisF"/>
    <property type="match status" value="1"/>
</dbReference>
<dbReference type="FunFam" id="3.20.20.70:FF:000006">
    <property type="entry name" value="Imidazole glycerol phosphate synthase subunit HisF"/>
    <property type="match status" value="1"/>
</dbReference>
<dbReference type="Gene3D" id="3.20.20.70">
    <property type="entry name" value="Aldolase class I"/>
    <property type="match status" value="1"/>
</dbReference>
<dbReference type="HAMAP" id="MF_01013">
    <property type="entry name" value="HisF"/>
    <property type="match status" value="1"/>
</dbReference>
<dbReference type="InterPro" id="IPR013785">
    <property type="entry name" value="Aldolase_TIM"/>
</dbReference>
<dbReference type="InterPro" id="IPR006062">
    <property type="entry name" value="His_biosynth"/>
</dbReference>
<dbReference type="InterPro" id="IPR004651">
    <property type="entry name" value="HisF"/>
</dbReference>
<dbReference type="InterPro" id="IPR050064">
    <property type="entry name" value="IGPS_HisA/HisF"/>
</dbReference>
<dbReference type="InterPro" id="IPR011060">
    <property type="entry name" value="RibuloseP-bd_barrel"/>
</dbReference>
<dbReference type="NCBIfam" id="TIGR00735">
    <property type="entry name" value="hisF"/>
    <property type="match status" value="1"/>
</dbReference>
<dbReference type="PANTHER" id="PTHR21235:SF2">
    <property type="entry name" value="IMIDAZOLE GLYCEROL PHOSPHATE SYNTHASE HISHF"/>
    <property type="match status" value="1"/>
</dbReference>
<dbReference type="PANTHER" id="PTHR21235">
    <property type="entry name" value="IMIDAZOLE GLYCEROL PHOSPHATE SYNTHASE SUBUNIT HISF/H IGP SYNTHASE SUBUNIT HISF/H"/>
    <property type="match status" value="1"/>
</dbReference>
<dbReference type="Pfam" id="PF00977">
    <property type="entry name" value="His_biosynth"/>
    <property type="match status" value="1"/>
</dbReference>
<dbReference type="SUPFAM" id="SSF51366">
    <property type="entry name" value="Ribulose-phoshate binding barrel"/>
    <property type="match status" value="1"/>
</dbReference>
<sequence>MTTKRIIACLDVKDGNVVKGVNFLNLQLKGDPVSLASLYEEEGADEIVFLDITATIEARKALYNVIKDTASVLSIPLTVGGGIRTPDDVSMALRSGADKVSINTAAVESSQIVKKSAEEFGSQAVVVAIDVKKVSGNWIVFTKSGTYNTRLDAIKWAKKVEELGAGEILLTSIDRDGTRLGYDLELTRKIVDSVNIPVIASGGAGKMEHFYEVFSLAKADAALAAGIFHDGIIKIKDLKSYLSQKGIEVRM</sequence>
<keyword id="KW-0028">Amino-acid biosynthesis</keyword>
<keyword id="KW-0963">Cytoplasm</keyword>
<keyword id="KW-0368">Histidine biosynthesis</keyword>
<keyword id="KW-0456">Lyase</keyword>
<keyword id="KW-1185">Reference proteome</keyword>
<feature type="chain" id="PRO_0000142290" description="Imidazole glycerol phosphate synthase subunit HisF">
    <location>
        <begin position="1"/>
        <end position="251"/>
    </location>
</feature>
<feature type="active site" evidence="2">
    <location>
        <position position="11"/>
    </location>
</feature>
<feature type="active site" evidence="2">
    <location>
        <position position="130"/>
    </location>
</feature>
<gene>
    <name type="primary">hisF</name>
    <name type="ordered locus">SSO0597</name>
    <name type="ORF">C08_052</name>
</gene>
<accession>O33774</accession>
<reference key="1">
    <citation type="journal article" date="1997" name="J. Bacteriol.">
        <title>Evolutionary analysis of the hisCGABdFDEHI gene cluster from the archaeon Sulfolobus solfataricus P2.</title>
        <authorList>
            <person name="Charlebois R.L."/>
            <person name="Sensen C.W."/>
            <person name="Doolittle W.F."/>
            <person name="Brown J.R."/>
        </authorList>
    </citation>
    <scope>NUCLEOTIDE SEQUENCE [GENOMIC DNA]</scope>
    <source>
        <strain>ATCC 35092 / DSM 1617 / JCM 11322 / P2</strain>
    </source>
</reference>
<reference key="2">
    <citation type="journal article" date="2000" name="Genome">
        <title>Gene content and organization of a 281-kbp contig from the genome of the extremely thermophilic archaeon, Sulfolobus solfataricus P2.</title>
        <authorList>
            <person name="Charlebois R.L."/>
            <person name="Singh R.K."/>
            <person name="Chan-Weiher C.C.-Y."/>
            <person name="Allard G."/>
            <person name="Chow C."/>
            <person name="Confalonieri F."/>
            <person name="Curtis B."/>
            <person name="Duguet M."/>
            <person name="Erauso G."/>
            <person name="Faguy D."/>
            <person name="Gaasterland T."/>
            <person name="Garrett R.A."/>
            <person name="Gordon P."/>
            <person name="Jeffries A.C."/>
            <person name="Kozera C."/>
            <person name="Kushwaha N."/>
            <person name="Lafleur E."/>
            <person name="Medina N."/>
            <person name="Peng X."/>
            <person name="Penny S.L."/>
            <person name="She Q."/>
            <person name="St Jean A."/>
            <person name="van der Oost J."/>
            <person name="Young F."/>
            <person name="Zivanovic Y."/>
            <person name="Doolittle W.F."/>
            <person name="Ragan M.A."/>
            <person name="Sensen C.W."/>
        </authorList>
    </citation>
    <scope>NUCLEOTIDE SEQUENCE [LARGE SCALE GENOMIC DNA]</scope>
    <source>
        <strain>ATCC 35092 / DSM 1617 / JCM 11322 / P2</strain>
    </source>
</reference>
<reference key="3">
    <citation type="journal article" date="2001" name="Proc. Natl. Acad. Sci. U.S.A.">
        <title>The complete genome of the crenarchaeon Sulfolobus solfataricus P2.</title>
        <authorList>
            <person name="She Q."/>
            <person name="Singh R.K."/>
            <person name="Confalonieri F."/>
            <person name="Zivanovic Y."/>
            <person name="Allard G."/>
            <person name="Awayez M.J."/>
            <person name="Chan-Weiher C.C.-Y."/>
            <person name="Clausen I.G."/>
            <person name="Curtis B.A."/>
            <person name="De Moors A."/>
            <person name="Erauso G."/>
            <person name="Fletcher C."/>
            <person name="Gordon P.M.K."/>
            <person name="Heikamp-de Jong I."/>
            <person name="Jeffries A.C."/>
            <person name="Kozera C.J."/>
            <person name="Medina N."/>
            <person name="Peng X."/>
            <person name="Thi-Ngoc H.P."/>
            <person name="Redder P."/>
            <person name="Schenk M.E."/>
            <person name="Theriault C."/>
            <person name="Tolstrup N."/>
            <person name="Charlebois R.L."/>
            <person name="Doolittle W.F."/>
            <person name="Duguet M."/>
            <person name="Gaasterland T."/>
            <person name="Garrett R.A."/>
            <person name="Ragan M.A."/>
            <person name="Sensen C.W."/>
            <person name="Van der Oost J."/>
        </authorList>
    </citation>
    <scope>NUCLEOTIDE SEQUENCE [LARGE SCALE GENOMIC DNA]</scope>
    <source>
        <strain>ATCC 35092 / DSM 1617 / JCM 11322 / P2</strain>
    </source>
</reference>
<name>HIS6_SACS2</name>
<organism>
    <name type="scientific">Saccharolobus solfataricus (strain ATCC 35092 / DSM 1617 / JCM 11322 / P2)</name>
    <name type="common">Sulfolobus solfataricus</name>
    <dbReference type="NCBI Taxonomy" id="273057"/>
    <lineage>
        <taxon>Archaea</taxon>
        <taxon>Thermoproteota</taxon>
        <taxon>Thermoprotei</taxon>
        <taxon>Sulfolobales</taxon>
        <taxon>Sulfolobaceae</taxon>
        <taxon>Saccharolobus</taxon>
    </lineage>
</organism>
<proteinExistence type="inferred from homology"/>
<protein>
    <recommendedName>
        <fullName>Imidazole glycerol phosphate synthase subunit HisF</fullName>
        <ecNumber>4.3.2.10</ecNumber>
    </recommendedName>
    <alternativeName>
        <fullName>IGP synthase cyclase subunit</fullName>
    </alternativeName>
    <alternativeName>
        <fullName>IGP synthase subunit HisF</fullName>
    </alternativeName>
    <alternativeName>
        <fullName>ImGP synthase subunit HisF</fullName>
        <shortName>IGPS subunit HisF</shortName>
    </alternativeName>
</protein>
<comment type="function">
    <text evidence="1">IGPS catalyzes the conversion of PRFAR and glutamine to IGP, AICAR and glutamate. The HisF subunit catalyzes the cyclization activity that produces IGP and AICAR from PRFAR using the ammonia provided by the HisH subunit (By similarity).</text>
</comment>
<comment type="catalytic activity">
    <reaction>
        <text>5-[(5-phospho-1-deoxy-D-ribulos-1-ylimino)methylamino]-1-(5-phospho-beta-D-ribosyl)imidazole-4-carboxamide + L-glutamine = D-erythro-1-(imidazol-4-yl)glycerol 3-phosphate + 5-amino-1-(5-phospho-beta-D-ribosyl)imidazole-4-carboxamide + L-glutamate + H(+)</text>
        <dbReference type="Rhea" id="RHEA:24793"/>
        <dbReference type="ChEBI" id="CHEBI:15378"/>
        <dbReference type="ChEBI" id="CHEBI:29985"/>
        <dbReference type="ChEBI" id="CHEBI:58278"/>
        <dbReference type="ChEBI" id="CHEBI:58359"/>
        <dbReference type="ChEBI" id="CHEBI:58475"/>
        <dbReference type="ChEBI" id="CHEBI:58525"/>
        <dbReference type="EC" id="4.3.2.10"/>
    </reaction>
</comment>
<comment type="pathway">
    <text>Amino-acid biosynthesis; L-histidine biosynthesis; L-histidine from 5-phospho-alpha-D-ribose 1-diphosphate: step 5/9.</text>
</comment>
<comment type="subunit">
    <text evidence="1">Heterodimer of HisH and HisF.</text>
</comment>
<comment type="subcellular location">
    <subcellularLocation>
        <location evidence="1">Cytoplasm</location>
    </subcellularLocation>
</comment>
<comment type="similarity">
    <text evidence="3">Belongs to the HisA/HisF family.</text>
</comment>
<evidence type="ECO:0000250" key="1"/>
<evidence type="ECO:0000255" key="2"/>
<evidence type="ECO:0000305" key="3"/>